<comment type="function">
    <text evidence="1 2">Ligand for members of the frizzled family of seven transmembrane receptors. Acts in the canonical Wnt signaling pathway by promoting beta-catenin-dependent transcriptional activation (By similarity). Plays an essential role in the development of the embryonic brain and central nervous system (CNS) (By similarity). Has a role in osteoblast function, bone development and bone homeostasis (By similarity).</text>
</comment>
<comment type="subcellular location">
    <subcellularLocation>
        <location evidence="2">Secreted</location>
        <location evidence="2">Extracellular space</location>
        <location evidence="2">Extracellular matrix</location>
    </subcellularLocation>
    <subcellularLocation>
        <location evidence="2">Secreted</location>
    </subcellularLocation>
</comment>
<comment type="PTM">
    <text evidence="4 5">Palmitoleoylation is required for efficient binding to frizzled receptors. Palmitoleoylation is necessary for proper trafficking to cell surface (By similarity). Depalmitoleoylated by NOTUM, leading to inhibit Wnt signaling pathway (By similarity).</text>
</comment>
<comment type="similarity">
    <text evidence="7">Belongs to the Wnt family.</text>
</comment>
<reference key="1">
    <citation type="journal article" date="1992" name="Proc. Natl. Acad. Sci. U.S.A.">
        <title>Diversification of the Wnt gene family on the ancestral lineage of vertebrates.</title>
        <authorList>
            <person name="Sidow A."/>
        </authorList>
    </citation>
    <scope>NUCLEOTIDE SEQUENCE [GENOMIC DNA]</scope>
</reference>
<protein>
    <recommendedName>
        <fullName>Protein Wnt-1</fullName>
    </recommendedName>
</protein>
<keyword id="KW-0217">Developmental protein</keyword>
<keyword id="KW-1015">Disulfide bond</keyword>
<keyword id="KW-0272">Extracellular matrix</keyword>
<keyword id="KW-0325">Glycoprotein</keyword>
<keyword id="KW-0449">Lipoprotein</keyword>
<keyword id="KW-0964">Secreted</keyword>
<keyword id="KW-0879">Wnt signaling pathway</keyword>
<organism>
    <name type="scientific">Plestiodon skiltonianus</name>
    <name type="common">Western skink</name>
    <name type="synonym">Eumeces skiltonianus</name>
    <dbReference type="NCBI Taxonomy" id="463545"/>
    <lineage>
        <taxon>Eukaryota</taxon>
        <taxon>Metazoa</taxon>
        <taxon>Chordata</taxon>
        <taxon>Craniata</taxon>
        <taxon>Vertebrata</taxon>
        <taxon>Euteleostomi</taxon>
        <taxon>Lepidosauria</taxon>
        <taxon>Squamata</taxon>
        <taxon>Bifurcata</taxon>
        <taxon>Unidentata</taxon>
        <taxon>Scinciformata</taxon>
        <taxon>Scincidae</taxon>
        <taxon>Scincinae</taxon>
        <taxon>Plestiodon</taxon>
    </lineage>
</organism>
<gene>
    <name type="primary">WNT-1</name>
</gene>
<accession>P28113</accession>
<evidence type="ECO:0000250" key="1">
    <source>
        <dbReference type="UniProtKB" id="P04426"/>
    </source>
</evidence>
<evidence type="ECO:0000250" key="2">
    <source>
        <dbReference type="UniProtKB" id="P04628"/>
    </source>
</evidence>
<evidence type="ECO:0000250" key="3">
    <source>
        <dbReference type="UniProtKB" id="P28026"/>
    </source>
</evidence>
<evidence type="ECO:0000250" key="4">
    <source>
        <dbReference type="UniProtKB" id="P56704"/>
    </source>
</evidence>
<evidence type="ECO:0000250" key="5">
    <source>
        <dbReference type="UniProtKB" id="Q91029"/>
    </source>
</evidence>
<evidence type="ECO:0000255" key="6"/>
<evidence type="ECO:0000305" key="7"/>
<name>WNT1_PLESK</name>
<sequence>SGSCTVKTCWMRLPTFRTVGDFLKDRFDGASRVIYGNKGSNRASRVELHHLEPENPAHKPPSPHDLVYFEKSPNFCTYSGKTGTAGTAGRSCNSSSPALDGCELLCCGRGYRTRTQRVTERCNCTF</sequence>
<dbReference type="EMBL" id="M91277">
    <property type="protein sequence ID" value="AAA49255.1"/>
    <property type="molecule type" value="Genomic_DNA"/>
</dbReference>
<dbReference type="SMR" id="P28113"/>
<dbReference type="GlyCosmos" id="P28113">
    <property type="glycosylation" value="2 sites, No reported glycans"/>
</dbReference>
<dbReference type="GO" id="GO:0005615">
    <property type="term" value="C:extracellular space"/>
    <property type="evidence" value="ECO:0007669"/>
    <property type="project" value="TreeGrafter"/>
</dbReference>
<dbReference type="GO" id="GO:0005125">
    <property type="term" value="F:cytokine activity"/>
    <property type="evidence" value="ECO:0007669"/>
    <property type="project" value="TreeGrafter"/>
</dbReference>
<dbReference type="GO" id="GO:0005109">
    <property type="term" value="F:frizzled binding"/>
    <property type="evidence" value="ECO:0007669"/>
    <property type="project" value="TreeGrafter"/>
</dbReference>
<dbReference type="GO" id="GO:0060070">
    <property type="term" value="P:canonical Wnt signaling pathway"/>
    <property type="evidence" value="ECO:0007669"/>
    <property type="project" value="TreeGrafter"/>
</dbReference>
<dbReference type="GO" id="GO:0045165">
    <property type="term" value="P:cell fate commitment"/>
    <property type="evidence" value="ECO:0007669"/>
    <property type="project" value="TreeGrafter"/>
</dbReference>
<dbReference type="GO" id="GO:0030182">
    <property type="term" value="P:neuron differentiation"/>
    <property type="evidence" value="ECO:0007669"/>
    <property type="project" value="TreeGrafter"/>
</dbReference>
<dbReference type="Gene3D" id="3.30.2460.20">
    <property type="match status" value="1"/>
</dbReference>
<dbReference type="InterPro" id="IPR005817">
    <property type="entry name" value="Wnt"/>
</dbReference>
<dbReference type="InterPro" id="IPR009139">
    <property type="entry name" value="Wnt1"/>
</dbReference>
<dbReference type="InterPro" id="IPR043158">
    <property type="entry name" value="Wnt_C"/>
</dbReference>
<dbReference type="PANTHER" id="PTHR12027:SF91">
    <property type="entry name" value="PROTO-ONCOGENE WNT-1"/>
    <property type="match status" value="1"/>
</dbReference>
<dbReference type="PANTHER" id="PTHR12027">
    <property type="entry name" value="WNT RELATED"/>
    <property type="match status" value="1"/>
</dbReference>
<dbReference type="Pfam" id="PF00110">
    <property type="entry name" value="wnt"/>
    <property type="match status" value="1"/>
</dbReference>
<dbReference type="PRINTS" id="PR01841">
    <property type="entry name" value="WNT1PROTEIN"/>
</dbReference>
<dbReference type="SMART" id="SM00097">
    <property type="entry name" value="WNT1"/>
    <property type="match status" value="1"/>
</dbReference>
<feature type="chain" id="PRO_0000200603" description="Protein Wnt-1">
    <location>
        <begin position="1" status="less than"/>
        <end position="126" status="greater than"/>
    </location>
</feature>
<feature type="lipid moiety-binding region" description="O-palmitoleoyl serine; by PORCN" evidence="5">
    <location>
        <position position="1"/>
    </location>
</feature>
<feature type="glycosylation site" description="N-linked (GlcNAc...) asparagine" evidence="6">
    <location>
        <position position="93"/>
    </location>
</feature>
<feature type="glycosylation site" description="N-linked (GlcNAc...) asparagine" evidence="6">
    <location>
        <position position="123"/>
    </location>
</feature>
<feature type="disulfide bond" evidence="3">
    <location>
        <begin position="92"/>
        <end position="107"/>
    </location>
</feature>
<feature type="non-terminal residue">
    <location>
        <position position="1"/>
    </location>
</feature>
<feature type="non-terminal residue">
    <location>
        <position position="126"/>
    </location>
</feature>
<proteinExistence type="inferred from homology"/>